<proteinExistence type="evidence at protein level"/>
<name>KT3K_MOUSE</name>
<comment type="function">
    <text evidence="3">Ketosamine-3-kinase involved in protein deglycation by mediating phosphorylation of ribuloselysine and psicoselysine on glycated proteins, to generate ribuloselysine-3 phosphate and psicoselysine-3 phosphate, respectively (PubMed:14633848). Ribuloselysine-3 phosphate and psicoselysine-3 phosphate adducts are unstable and decompose under physiological conditions (PubMed:14633848). Not able to phosphorylate fructoselysine (PubMed:14633848).</text>
</comment>
<comment type="catalytic activity">
    <reaction evidence="2">
        <text>N(6)-D-ribulosyl-L-lysyl-[protein] + ATP = N(6)-(3-O-phospho-D-ribulosyl)-L-lysyl-[protein] + ADP + H(+)</text>
        <dbReference type="Rhea" id="RHEA:48432"/>
        <dbReference type="Rhea" id="RHEA-COMP:12103"/>
        <dbReference type="Rhea" id="RHEA-COMP:12104"/>
        <dbReference type="ChEBI" id="CHEBI:15378"/>
        <dbReference type="ChEBI" id="CHEBI:30616"/>
        <dbReference type="ChEBI" id="CHEBI:90418"/>
        <dbReference type="ChEBI" id="CHEBI:90420"/>
        <dbReference type="ChEBI" id="CHEBI:456216"/>
        <dbReference type="EC" id="2.7.1.172"/>
    </reaction>
    <physiologicalReaction direction="left-to-right" evidence="2">
        <dbReference type="Rhea" id="RHEA:48433"/>
    </physiologicalReaction>
</comment>
<comment type="catalytic activity">
    <reaction evidence="2">
        <text>N(6)-(D-psicosyl)-L-lysyl-[protein] + ATP = N(6)-(3-O-phospho-D-psicosyl)-L-lysyl-[protein] + ADP + H(+)</text>
        <dbReference type="Rhea" id="RHEA:61392"/>
        <dbReference type="Rhea" id="RHEA-COMP:15796"/>
        <dbReference type="Rhea" id="RHEA-COMP:15797"/>
        <dbReference type="ChEBI" id="CHEBI:15378"/>
        <dbReference type="ChEBI" id="CHEBI:30616"/>
        <dbReference type="ChEBI" id="CHEBI:144621"/>
        <dbReference type="ChEBI" id="CHEBI:144622"/>
        <dbReference type="ChEBI" id="CHEBI:456216"/>
    </reaction>
    <physiologicalReaction direction="left-to-right" evidence="2">
        <dbReference type="Rhea" id="RHEA:61393"/>
    </physiologicalReaction>
</comment>
<comment type="domain">
    <text evidence="2">The ATP-binding domain is structurally related to aminoglycoside phosphotransferase family.</text>
</comment>
<comment type="similarity">
    <text evidence="5">Belongs to the fructosamine kinase family.</text>
</comment>
<reference key="1">
    <citation type="journal article" date="2003" name="Diabetes">
        <title>A mammalian protein homologous to fructosamine-3-kinase is a ketosamine-3-kinase acting on psicosamines and ribulosamines but not on fructosamines.</title>
        <authorList>
            <person name="Collard F."/>
            <person name="Delpierre G."/>
            <person name="Stroobant V."/>
            <person name="Matthijs G."/>
            <person name="Van Schaftingen E."/>
        </authorList>
    </citation>
    <scope>NUCLEOTIDE SEQUENCE [MRNA]</scope>
    <scope>FUNCTION</scope>
    <source>
        <strain>NMRI</strain>
    </source>
</reference>
<reference key="2">
    <citation type="journal article" date="2009" name="PLoS Biol.">
        <title>Lineage-specific biology revealed by a finished genome assembly of the mouse.</title>
        <authorList>
            <person name="Church D.M."/>
            <person name="Goodstadt L."/>
            <person name="Hillier L.W."/>
            <person name="Zody M.C."/>
            <person name="Goldstein S."/>
            <person name="She X."/>
            <person name="Bult C.J."/>
            <person name="Agarwala R."/>
            <person name="Cherry J.L."/>
            <person name="DiCuccio M."/>
            <person name="Hlavina W."/>
            <person name="Kapustin Y."/>
            <person name="Meric P."/>
            <person name="Maglott D."/>
            <person name="Birtle Z."/>
            <person name="Marques A.C."/>
            <person name="Graves T."/>
            <person name="Zhou S."/>
            <person name="Teague B."/>
            <person name="Potamousis K."/>
            <person name="Churas C."/>
            <person name="Place M."/>
            <person name="Herschleb J."/>
            <person name="Runnheim R."/>
            <person name="Forrest D."/>
            <person name="Amos-Landgraf J."/>
            <person name="Schwartz D.C."/>
            <person name="Cheng Z."/>
            <person name="Lindblad-Toh K."/>
            <person name="Eichler E.E."/>
            <person name="Ponting C.P."/>
        </authorList>
    </citation>
    <scope>NUCLEOTIDE SEQUENCE [LARGE SCALE GENOMIC DNA]</scope>
    <source>
        <strain>C57BL/6J</strain>
    </source>
</reference>
<reference key="3">
    <citation type="submission" date="2005-07" db="EMBL/GenBank/DDBJ databases">
        <authorList>
            <person name="Mural R.J."/>
            <person name="Adams M.D."/>
            <person name="Myers E.W."/>
            <person name="Smith H.O."/>
            <person name="Venter J.C."/>
        </authorList>
    </citation>
    <scope>NUCLEOTIDE SEQUENCE [LARGE SCALE GENOMIC DNA]</scope>
</reference>
<reference key="4">
    <citation type="journal article" date="2004" name="Genome Res.">
        <title>The status, quality, and expansion of the NIH full-length cDNA project: the Mammalian Gene Collection (MGC).</title>
        <authorList>
            <consortium name="The MGC Project Team"/>
        </authorList>
    </citation>
    <scope>NUCLEOTIDE SEQUENCE [LARGE SCALE MRNA]</scope>
</reference>
<reference key="5">
    <citation type="journal article" date="2010" name="Cell">
        <title>A tissue-specific atlas of mouse protein phosphorylation and expression.</title>
        <authorList>
            <person name="Huttlin E.L."/>
            <person name="Jedrychowski M.P."/>
            <person name="Elias J.E."/>
            <person name="Goswami T."/>
            <person name="Rad R."/>
            <person name="Beausoleil S.A."/>
            <person name="Villen J."/>
            <person name="Haas W."/>
            <person name="Sowa M.E."/>
            <person name="Gygi S.P."/>
        </authorList>
    </citation>
    <scope>IDENTIFICATION BY MASS SPECTROMETRY [LARGE SCALE ANALYSIS]</scope>
    <source>
        <tissue>Brain</tissue>
        <tissue>Kidney</tissue>
        <tissue>Lung</tissue>
        <tissue>Pancreas</tissue>
        <tissue>Spleen</tissue>
        <tissue>Testis</tissue>
    </source>
</reference>
<organism>
    <name type="scientific">Mus musculus</name>
    <name type="common">Mouse</name>
    <dbReference type="NCBI Taxonomy" id="10090"/>
    <lineage>
        <taxon>Eukaryota</taxon>
        <taxon>Metazoa</taxon>
        <taxon>Chordata</taxon>
        <taxon>Craniata</taxon>
        <taxon>Vertebrata</taxon>
        <taxon>Euteleostomi</taxon>
        <taxon>Mammalia</taxon>
        <taxon>Eutheria</taxon>
        <taxon>Euarchontoglires</taxon>
        <taxon>Glires</taxon>
        <taxon>Rodentia</taxon>
        <taxon>Myomorpha</taxon>
        <taxon>Muroidea</taxon>
        <taxon>Muridae</taxon>
        <taxon>Murinae</taxon>
        <taxon>Mus</taxon>
        <taxon>Mus</taxon>
    </lineage>
</organism>
<gene>
    <name evidence="6" type="primary">Fn3krp</name>
</gene>
<keyword id="KW-0067">ATP-binding</keyword>
<keyword id="KW-0418">Kinase</keyword>
<keyword id="KW-0547">Nucleotide-binding</keyword>
<keyword id="KW-0597">Phosphoprotein</keyword>
<keyword id="KW-1185">Reference proteome</keyword>
<keyword id="KW-0808">Transferase</keyword>
<evidence type="ECO:0000250" key="1">
    <source>
        <dbReference type="UniProtKB" id="P9WI99"/>
    </source>
</evidence>
<evidence type="ECO:0000250" key="2">
    <source>
        <dbReference type="UniProtKB" id="Q9HA64"/>
    </source>
</evidence>
<evidence type="ECO:0000269" key="3">
    <source>
    </source>
</evidence>
<evidence type="ECO:0000303" key="4">
    <source>
    </source>
</evidence>
<evidence type="ECO:0000305" key="5"/>
<evidence type="ECO:0000312" key="6">
    <source>
        <dbReference type="MGI" id="MGI:2679256"/>
    </source>
</evidence>
<accession>Q8K274</accession>
<accession>B1ATT5</accession>
<dbReference type="EC" id="2.7.1.172" evidence="2"/>
<dbReference type="EC" id="2.7.1.-" evidence="2"/>
<dbReference type="EMBL" id="AY360466">
    <property type="protein sequence ID" value="AAQ72345.1"/>
    <property type="molecule type" value="mRNA"/>
</dbReference>
<dbReference type="EMBL" id="AL663088">
    <property type="status" value="NOT_ANNOTATED_CDS"/>
    <property type="molecule type" value="Genomic_DNA"/>
</dbReference>
<dbReference type="EMBL" id="CH466558">
    <property type="protein sequence ID" value="EDL34839.1"/>
    <property type="molecule type" value="Genomic_DNA"/>
</dbReference>
<dbReference type="EMBL" id="BC032265">
    <property type="protein sequence ID" value="AAH32265.1"/>
    <property type="molecule type" value="mRNA"/>
</dbReference>
<dbReference type="CCDS" id="CCDS25775.1"/>
<dbReference type="RefSeq" id="NP_852085.2">
    <property type="nucleotide sequence ID" value="NM_181420.3"/>
</dbReference>
<dbReference type="SMR" id="Q8K274"/>
<dbReference type="BioGRID" id="231941">
    <property type="interactions" value="1"/>
</dbReference>
<dbReference type="FunCoup" id="Q8K274">
    <property type="interactions" value="344"/>
</dbReference>
<dbReference type="STRING" id="10090.ENSMUSP00000038061"/>
<dbReference type="iPTMnet" id="Q8K274"/>
<dbReference type="PhosphoSitePlus" id="Q8K274"/>
<dbReference type="SwissPalm" id="Q8K274"/>
<dbReference type="PaxDb" id="10090-ENSMUSP00000038061"/>
<dbReference type="PeptideAtlas" id="Q8K274"/>
<dbReference type="ProteomicsDB" id="289991"/>
<dbReference type="Pumba" id="Q8K274"/>
<dbReference type="Antibodypedia" id="33041">
    <property type="antibodies" value="107 antibodies from 25 providers"/>
</dbReference>
<dbReference type="DNASU" id="238024"/>
<dbReference type="Ensembl" id="ENSMUST00000038096.8">
    <property type="protein sequence ID" value="ENSMUSP00000038061.8"/>
    <property type="gene ID" value="ENSMUSG00000039253.8"/>
</dbReference>
<dbReference type="GeneID" id="238024"/>
<dbReference type="KEGG" id="mmu:238024"/>
<dbReference type="UCSC" id="uc007mvv.2">
    <property type="organism name" value="mouse"/>
</dbReference>
<dbReference type="AGR" id="MGI:2679256"/>
<dbReference type="CTD" id="79672"/>
<dbReference type="MGI" id="MGI:2679256">
    <property type="gene designation" value="Fn3krp"/>
</dbReference>
<dbReference type="VEuPathDB" id="HostDB:ENSMUSG00000039253"/>
<dbReference type="eggNOG" id="KOG3021">
    <property type="taxonomic scope" value="Eukaryota"/>
</dbReference>
<dbReference type="GeneTree" id="ENSGT00390000005730"/>
<dbReference type="HOGENOM" id="CLU_036517_0_1_1"/>
<dbReference type="InParanoid" id="Q8K274"/>
<dbReference type="OMA" id="RECDIAM"/>
<dbReference type="OrthoDB" id="5772781at2759"/>
<dbReference type="PhylomeDB" id="Q8K274"/>
<dbReference type="TreeFam" id="TF313452"/>
<dbReference type="BRENDA" id="2.7.1.171">
    <property type="organism ID" value="3474"/>
</dbReference>
<dbReference type="BRENDA" id="2.7.1.172">
    <property type="organism ID" value="3474"/>
</dbReference>
<dbReference type="Reactome" id="R-MMU-163841">
    <property type="pathway name" value="Gamma carboxylation, hypusinylation, hydroxylation, and arylsulfatase activation"/>
</dbReference>
<dbReference type="BioGRID-ORCS" id="238024">
    <property type="hits" value="4 hits in 76 CRISPR screens"/>
</dbReference>
<dbReference type="ChiTaRS" id="Fn3krp">
    <property type="organism name" value="mouse"/>
</dbReference>
<dbReference type="PRO" id="PR:Q8K274"/>
<dbReference type="Proteomes" id="UP000000589">
    <property type="component" value="Chromosome 11"/>
</dbReference>
<dbReference type="RNAct" id="Q8K274">
    <property type="molecule type" value="protein"/>
</dbReference>
<dbReference type="Bgee" id="ENSMUSG00000039253">
    <property type="expression patterns" value="Expressed in lens of camera-type eye and 62 other cell types or tissues"/>
</dbReference>
<dbReference type="GO" id="GO:0005829">
    <property type="term" value="C:cytosol"/>
    <property type="evidence" value="ECO:0000266"/>
    <property type="project" value="MGI"/>
</dbReference>
<dbReference type="GO" id="GO:0005524">
    <property type="term" value="F:ATP binding"/>
    <property type="evidence" value="ECO:0007669"/>
    <property type="project" value="UniProtKB-KW"/>
</dbReference>
<dbReference type="GO" id="GO:0016301">
    <property type="term" value="F:kinase activity"/>
    <property type="evidence" value="ECO:0007669"/>
    <property type="project" value="UniProtKB-KW"/>
</dbReference>
<dbReference type="GO" id="GO:0102193">
    <property type="term" value="F:protein-ribulosamine 3-kinase activity"/>
    <property type="evidence" value="ECO:0000266"/>
    <property type="project" value="MGI"/>
</dbReference>
<dbReference type="FunFam" id="3.90.1200.10:FF:000003">
    <property type="entry name" value="fructosamine-3-kinase isoform X1"/>
    <property type="match status" value="1"/>
</dbReference>
<dbReference type="FunFam" id="3.30.200.20:FF:000264">
    <property type="entry name" value="Protein-ribulosamine 3-kinase, chloroplastic"/>
    <property type="match status" value="1"/>
</dbReference>
<dbReference type="Gene3D" id="3.90.1200.10">
    <property type="match status" value="1"/>
</dbReference>
<dbReference type="Gene3D" id="3.30.200.20">
    <property type="entry name" value="Phosphorylase Kinase, domain 1"/>
    <property type="match status" value="1"/>
</dbReference>
<dbReference type="InterPro" id="IPR016477">
    <property type="entry name" value="Fructo-/Ketosamine-3-kinase"/>
</dbReference>
<dbReference type="InterPro" id="IPR011009">
    <property type="entry name" value="Kinase-like_dom_sf"/>
</dbReference>
<dbReference type="PANTHER" id="PTHR12149">
    <property type="entry name" value="FRUCTOSAMINE 3 KINASE-RELATED PROTEIN"/>
    <property type="match status" value="1"/>
</dbReference>
<dbReference type="PANTHER" id="PTHR12149:SF10">
    <property type="entry name" value="KETOSAMINE-3-KINASE"/>
    <property type="match status" value="1"/>
</dbReference>
<dbReference type="Pfam" id="PF03881">
    <property type="entry name" value="Fructosamin_kin"/>
    <property type="match status" value="1"/>
</dbReference>
<dbReference type="PIRSF" id="PIRSF006221">
    <property type="entry name" value="Ketosamine-3-kinase"/>
    <property type="match status" value="1"/>
</dbReference>
<dbReference type="SUPFAM" id="SSF56112">
    <property type="entry name" value="Protein kinase-like (PK-like)"/>
    <property type="match status" value="1"/>
</dbReference>
<feature type="chain" id="PRO_0000216340" description="Ketosamine-3-kinase">
    <location>
        <begin position="1"/>
        <end position="309"/>
    </location>
</feature>
<feature type="active site" description="Proton acceptor" evidence="1">
    <location>
        <position position="217"/>
    </location>
</feature>
<feature type="binding site" evidence="2">
    <location>
        <begin position="89"/>
        <end position="91"/>
    </location>
    <ligand>
        <name>ATP</name>
        <dbReference type="ChEBI" id="CHEBI:30616"/>
    </ligand>
</feature>
<feature type="modified residue" description="Phosphoserine" evidence="2">
    <location>
        <position position="20"/>
    </location>
</feature>
<feature type="sequence conflict" description="In Ref. 4; AAH32265." evidence="5" ref="4">
    <original>R</original>
    <variation>K</variation>
    <location>
        <position position="120"/>
    </location>
</feature>
<protein>
    <recommendedName>
        <fullName evidence="4">Ketosamine-3-kinase</fullName>
        <ecNumber evidence="2">2.7.1.172</ecNumber>
    </recommendedName>
    <alternativeName>
        <fullName evidence="2">Fructosamine-3-kinase-related protein</fullName>
        <shortName evidence="2">FN3K-RP</shortName>
        <shortName evidence="2">FN3K-related protein</shortName>
    </alternativeName>
    <alternativeName>
        <fullName evidence="5">Protein-psicosamine 3-kinase FN3KRP</fullName>
        <ecNumber evidence="2">2.7.1.-</ecNumber>
    </alternativeName>
</protein>
<sequence>METLLKRELGCSSVKATGHSGGGCISQGQSYDTDKGRVFVKVNSKAEARRMFEGEMASLTAILKTGTVKVPKPIKVVDAPGGGSMLVMEHLDMRYLSSHATKLGTQLADLHLENKRLGERLLKEAGTVGKGGEQAERQYVDQFGFDVVTCCGYLPQVNDWQKNWVEFYARQRIQPQMDMVEKKSGDREALELWSALQLKIPDLFRDLEIVPALLHGDLWGGNVAEDSSGPIIFDPASFYGHSEYELAIAGMFGGFSSSFYSAYHSKIPKTPGFEKRLQLYQLFHYLNHWNHFGSGYRGSSLNIMRNLSK</sequence>